<feature type="signal peptide" evidence="1">
    <location>
        <begin position="1"/>
        <end position="26"/>
    </location>
</feature>
<feature type="propeptide" id="PRO_0000027397" description="Activation peptide" evidence="1">
    <location>
        <begin position="27"/>
        <end position="28"/>
    </location>
</feature>
<feature type="chain" id="PRO_0000027398" description="Granzyme A">
    <location>
        <begin position="29"/>
        <end position="258"/>
    </location>
</feature>
<feature type="domain" description="Peptidase S1" evidence="4">
    <location>
        <begin position="29"/>
        <end position="255"/>
    </location>
</feature>
<feature type="active site" description="Charge relay system" evidence="2">
    <location>
        <position position="67"/>
    </location>
</feature>
<feature type="active site" description="Charge relay system" evidence="2">
    <location>
        <position position="112"/>
    </location>
</feature>
<feature type="active site" description="Charge relay system" evidence="2">
    <location>
        <position position="211"/>
    </location>
</feature>
<feature type="glycosylation site" description="N-linked (GlcNAc...) asparagine" evidence="3">
    <location>
        <position position="169"/>
    </location>
</feature>
<feature type="disulfide bond" evidence="4">
    <location>
        <begin position="52"/>
        <end position="68"/>
    </location>
</feature>
<feature type="disulfide bond" evidence="4">
    <location>
        <begin position="146"/>
        <end position="217"/>
    </location>
</feature>
<feature type="disulfide bond" evidence="4">
    <location>
        <begin position="178"/>
        <end position="196"/>
    </location>
</feature>
<feature type="disulfide bond" evidence="4">
    <location>
        <begin position="207"/>
        <end position="230"/>
    </location>
</feature>
<proteinExistence type="evidence at transcript level"/>
<name>GRAA_BOVIN</name>
<protein>
    <recommendedName>
        <fullName>Granzyme A</fullName>
        <ecNumber>3.4.21.78</ecNumber>
    </recommendedName>
</protein>
<evidence type="ECO:0000250" key="1"/>
<evidence type="ECO:0000250" key="2">
    <source>
        <dbReference type="UniProtKB" id="P12544"/>
    </source>
</evidence>
<evidence type="ECO:0000255" key="3"/>
<evidence type="ECO:0000255" key="4">
    <source>
        <dbReference type="PROSITE-ProRule" id="PRU00274"/>
    </source>
</evidence>
<sequence length="258" mass="28070">MNIPFPFSFPPAICLLLIPGVFPVSCEGIIGGNEVAPHTRRYMALIKGLKLCAGALIKENWVLTAAHCDLKGNPQVILGAHSTSHKEKLDQVFSIKKAIPYPCFDPQTFEGDLQLLQLEGKATMTKAVGILQLPRTEDDVKPHTKCHVAGWGSTKKDACQMSNALREANVTVIDRKICNDAQHYNFNPVIDLSMICAGGRKGEDDSCEGDSGSPLICDNVFRGVTSFGKCGNPQKPGIYILLTKKHLNWIKKTIAGAI</sequence>
<keyword id="KW-0204">Cytolysis</keyword>
<keyword id="KW-1015">Disulfide bond</keyword>
<keyword id="KW-0325">Glycoprotein</keyword>
<keyword id="KW-0378">Hydrolase</keyword>
<keyword id="KW-0645">Protease</keyword>
<keyword id="KW-1185">Reference proteome</keyword>
<keyword id="KW-0964">Secreted</keyword>
<keyword id="KW-0720">Serine protease</keyword>
<keyword id="KW-0732">Signal</keyword>
<keyword id="KW-0865">Zymogen</keyword>
<reference key="1">
    <citation type="submission" date="2003-02" db="EMBL/GenBank/DDBJ databases">
        <authorList>
            <person name="Jenne D.E."/>
        </authorList>
    </citation>
    <scope>NUCLEOTIDE SEQUENCE [MRNA]</scope>
</reference>
<dbReference type="EC" id="3.4.21.78"/>
<dbReference type="EMBL" id="AJ544059">
    <property type="protein sequence ID" value="CAD66427.1"/>
    <property type="molecule type" value="mRNA"/>
</dbReference>
<dbReference type="RefSeq" id="NP_001001142.1">
    <property type="nucleotide sequence ID" value="NM_001001142.1"/>
</dbReference>
<dbReference type="SMR" id="Q7YRZ7"/>
<dbReference type="FunCoup" id="Q7YRZ7">
    <property type="interactions" value="24"/>
</dbReference>
<dbReference type="STRING" id="9913.ENSBTAP00000039959"/>
<dbReference type="MEROPS" id="S01.135"/>
<dbReference type="GlyCosmos" id="Q7YRZ7">
    <property type="glycosylation" value="1 site, No reported glycans"/>
</dbReference>
<dbReference type="GlyGen" id="Q7YRZ7">
    <property type="glycosylation" value="1 site"/>
</dbReference>
<dbReference type="PaxDb" id="9913-ENSBTAP00000039959"/>
<dbReference type="Ensembl" id="ENSBTAT00000040181.5">
    <property type="protein sequence ID" value="ENSBTAP00000039959.3"/>
    <property type="gene ID" value="ENSBTAG00000027865.5"/>
</dbReference>
<dbReference type="GeneID" id="407178"/>
<dbReference type="KEGG" id="bta:407178"/>
<dbReference type="CTD" id="3001"/>
<dbReference type="VEuPathDB" id="HostDB:ENSBTAG00000027865"/>
<dbReference type="eggNOG" id="KOG3627">
    <property type="taxonomic scope" value="Eukaryota"/>
</dbReference>
<dbReference type="GeneTree" id="ENSGT00940000167010"/>
<dbReference type="HOGENOM" id="CLU_006842_1_0_1"/>
<dbReference type="InParanoid" id="Q7YRZ7"/>
<dbReference type="OMA" id="PLRCNNI"/>
<dbReference type="OrthoDB" id="6755574at2759"/>
<dbReference type="TreeFam" id="TF333630"/>
<dbReference type="Proteomes" id="UP000009136">
    <property type="component" value="Chromosome 20"/>
</dbReference>
<dbReference type="Bgee" id="ENSBTAG00000027865">
    <property type="expression patterns" value="Expressed in caecum and 42 other cell types or tissues"/>
</dbReference>
<dbReference type="GO" id="GO:0005615">
    <property type="term" value="C:extracellular space"/>
    <property type="evidence" value="ECO:0000318"/>
    <property type="project" value="GO_Central"/>
</dbReference>
<dbReference type="GO" id="GO:0004252">
    <property type="term" value="F:serine-type endopeptidase activity"/>
    <property type="evidence" value="ECO:0000250"/>
    <property type="project" value="UniProtKB"/>
</dbReference>
<dbReference type="GO" id="GO:1902483">
    <property type="term" value="P:cytotoxic T cell pyroptotic cell death"/>
    <property type="evidence" value="ECO:0000250"/>
    <property type="project" value="UniProtKB"/>
</dbReference>
<dbReference type="GO" id="GO:0140507">
    <property type="term" value="P:granzyme-mediated programmed cell death signaling pathway"/>
    <property type="evidence" value="ECO:0000250"/>
    <property type="project" value="UniProtKB"/>
</dbReference>
<dbReference type="GO" id="GO:0031640">
    <property type="term" value="P:killing of cells of another organism"/>
    <property type="evidence" value="ECO:0007669"/>
    <property type="project" value="UniProtKB-KW"/>
</dbReference>
<dbReference type="GO" id="GO:0043392">
    <property type="term" value="P:negative regulation of DNA binding"/>
    <property type="evidence" value="ECO:0000250"/>
    <property type="project" value="UniProtKB"/>
</dbReference>
<dbReference type="GO" id="GO:0032078">
    <property type="term" value="P:negative regulation of endodeoxyribonuclease activity"/>
    <property type="evidence" value="ECO:0000250"/>
    <property type="project" value="UniProtKB"/>
</dbReference>
<dbReference type="GO" id="GO:0051354">
    <property type="term" value="P:negative regulation of oxidoreductase activity"/>
    <property type="evidence" value="ECO:0000250"/>
    <property type="project" value="UniProtKB"/>
</dbReference>
<dbReference type="GO" id="GO:0043065">
    <property type="term" value="P:positive regulation of apoptotic process"/>
    <property type="evidence" value="ECO:0000250"/>
    <property type="project" value="UniProtKB"/>
</dbReference>
<dbReference type="GO" id="GO:0051604">
    <property type="term" value="P:protein maturation"/>
    <property type="evidence" value="ECO:0000318"/>
    <property type="project" value="GO_Central"/>
</dbReference>
<dbReference type="GO" id="GO:0051603">
    <property type="term" value="P:proteolysis involved in protein catabolic process"/>
    <property type="evidence" value="ECO:0000250"/>
    <property type="project" value="UniProtKB"/>
</dbReference>
<dbReference type="GO" id="GO:0070269">
    <property type="term" value="P:pyroptotic inflammatory response"/>
    <property type="evidence" value="ECO:0000250"/>
    <property type="project" value="UniProtKB"/>
</dbReference>
<dbReference type="CDD" id="cd00190">
    <property type="entry name" value="Tryp_SPc"/>
    <property type="match status" value="1"/>
</dbReference>
<dbReference type="FunFam" id="2.40.10.10:FF:000014">
    <property type="entry name" value="Complement factor D"/>
    <property type="match status" value="1"/>
</dbReference>
<dbReference type="Gene3D" id="2.40.10.10">
    <property type="entry name" value="Trypsin-like serine proteases"/>
    <property type="match status" value="2"/>
</dbReference>
<dbReference type="InterPro" id="IPR009003">
    <property type="entry name" value="Peptidase_S1_PA"/>
</dbReference>
<dbReference type="InterPro" id="IPR043504">
    <property type="entry name" value="Peptidase_S1_PA_chymotrypsin"/>
</dbReference>
<dbReference type="InterPro" id="IPR001314">
    <property type="entry name" value="Peptidase_S1A"/>
</dbReference>
<dbReference type="InterPro" id="IPR001254">
    <property type="entry name" value="Trypsin_dom"/>
</dbReference>
<dbReference type="InterPro" id="IPR018114">
    <property type="entry name" value="TRYPSIN_HIS"/>
</dbReference>
<dbReference type="InterPro" id="IPR033116">
    <property type="entry name" value="TRYPSIN_SER"/>
</dbReference>
<dbReference type="PANTHER" id="PTHR24271:SF72">
    <property type="entry name" value="GRANZYME A"/>
    <property type="match status" value="1"/>
</dbReference>
<dbReference type="PANTHER" id="PTHR24271">
    <property type="entry name" value="KALLIKREIN-RELATED"/>
    <property type="match status" value="1"/>
</dbReference>
<dbReference type="Pfam" id="PF00089">
    <property type="entry name" value="Trypsin"/>
    <property type="match status" value="1"/>
</dbReference>
<dbReference type="PRINTS" id="PR00722">
    <property type="entry name" value="CHYMOTRYPSIN"/>
</dbReference>
<dbReference type="SMART" id="SM00020">
    <property type="entry name" value="Tryp_SPc"/>
    <property type="match status" value="1"/>
</dbReference>
<dbReference type="SUPFAM" id="SSF50494">
    <property type="entry name" value="Trypsin-like serine proteases"/>
    <property type="match status" value="1"/>
</dbReference>
<dbReference type="PROSITE" id="PS50240">
    <property type="entry name" value="TRYPSIN_DOM"/>
    <property type="match status" value="1"/>
</dbReference>
<dbReference type="PROSITE" id="PS00134">
    <property type="entry name" value="TRYPSIN_HIS"/>
    <property type="match status" value="1"/>
</dbReference>
<dbReference type="PROSITE" id="PS00135">
    <property type="entry name" value="TRYPSIN_SER"/>
    <property type="match status" value="1"/>
</dbReference>
<accession>Q7YRZ7</accession>
<comment type="function">
    <text evidence="2">Abundant protease in the cytosolic granules of cytotoxic T-cells and NK-cells which activates caspase-independent pyroptosis when delivered into the target cell through the immunological synapse. It cleaves after Lys or Arg. Cleaves APEX1 after 'Lys-31' and destroys its oxidative repair activity. Cleaves the nucleosome assembly protein SET after 'Lys-189', which disrupts its nucleosome assembly activity and allows the SET complex to translocate into the nucleus to nick and degrade the DNA.</text>
</comment>
<comment type="catalytic activity">
    <reaction evidence="2">
        <text>Hydrolysis of proteins, including fibronectin, type IV collagen and nucleolin. Preferential cleavage: -Arg-|-Xaa-, -Lys-|-Xaa- &gt;&gt; -Phe-|-Xaa- in small molecule substrates.</text>
        <dbReference type="EC" id="3.4.21.78"/>
    </reaction>
</comment>
<comment type="subunit">
    <text evidence="2">Homodimer; disulfide-linked. Interacts with APEX1.</text>
</comment>
<comment type="subcellular location">
    <subcellularLocation>
        <location evidence="2">Secreted</location>
    </subcellularLocation>
    <subcellularLocation>
        <location evidence="2">Cytoplasmic granule</location>
    </subcellularLocation>
    <text evidence="2">Delivered into the target cell by perforin.</text>
</comment>
<comment type="similarity">
    <text evidence="4">Belongs to the peptidase S1 family. Granzyme subfamily.</text>
</comment>
<organism>
    <name type="scientific">Bos taurus</name>
    <name type="common">Bovine</name>
    <dbReference type="NCBI Taxonomy" id="9913"/>
    <lineage>
        <taxon>Eukaryota</taxon>
        <taxon>Metazoa</taxon>
        <taxon>Chordata</taxon>
        <taxon>Craniata</taxon>
        <taxon>Vertebrata</taxon>
        <taxon>Euteleostomi</taxon>
        <taxon>Mammalia</taxon>
        <taxon>Eutheria</taxon>
        <taxon>Laurasiatheria</taxon>
        <taxon>Artiodactyla</taxon>
        <taxon>Ruminantia</taxon>
        <taxon>Pecora</taxon>
        <taxon>Bovidae</taxon>
        <taxon>Bovinae</taxon>
        <taxon>Bos</taxon>
    </lineage>
</organism>
<gene>
    <name type="primary">GZMA</name>
</gene>